<protein>
    <recommendedName>
        <fullName evidence="1">Divalent metal cation transporter MntH</fullName>
    </recommendedName>
</protein>
<reference key="1">
    <citation type="journal article" date="2006" name="Lancet">
        <title>Complete genome sequence of USA300, an epidemic clone of community-acquired meticillin-resistant Staphylococcus aureus.</title>
        <authorList>
            <person name="Diep B.A."/>
            <person name="Gill S.R."/>
            <person name="Chang R.F."/>
            <person name="Phan T.H."/>
            <person name="Chen J.H."/>
            <person name="Davidson M.G."/>
            <person name="Lin F."/>
            <person name="Lin J."/>
            <person name="Carleton H.A."/>
            <person name="Mongodin E.F."/>
            <person name="Sensabaugh G.F."/>
            <person name="Perdreau-Remington F."/>
        </authorList>
    </citation>
    <scope>NUCLEOTIDE SEQUENCE [LARGE SCALE GENOMIC DNA]</scope>
    <source>
        <strain>USA300</strain>
    </source>
</reference>
<name>MNTH_STAA3</name>
<feature type="chain" id="PRO_1000024113" description="Divalent metal cation transporter MntH">
    <location>
        <begin position="1"/>
        <end position="450"/>
    </location>
</feature>
<feature type="transmembrane region" description="Helical" evidence="1">
    <location>
        <begin position="34"/>
        <end position="54"/>
    </location>
</feature>
<feature type="transmembrane region" description="Helical" evidence="1">
    <location>
        <begin position="61"/>
        <end position="81"/>
    </location>
</feature>
<feature type="transmembrane region" description="Helical" evidence="1">
    <location>
        <begin position="108"/>
        <end position="128"/>
    </location>
</feature>
<feature type="transmembrane region" description="Helical" evidence="1">
    <location>
        <begin position="141"/>
        <end position="161"/>
    </location>
</feature>
<feature type="transmembrane region" description="Helical" evidence="1">
    <location>
        <begin position="170"/>
        <end position="190"/>
    </location>
</feature>
<feature type="transmembrane region" description="Helical" evidence="1">
    <location>
        <begin position="212"/>
        <end position="232"/>
    </location>
</feature>
<feature type="transmembrane region" description="Helical" evidence="1">
    <location>
        <begin position="263"/>
        <end position="283"/>
    </location>
</feature>
<feature type="transmembrane region" description="Helical" evidence="1">
    <location>
        <begin position="305"/>
        <end position="325"/>
    </location>
</feature>
<feature type="transmembrane region" description="Helical" evidence="1">
    <location>
        <begin position="361"/>
        <end position="381"/>
    </location>
</feature>
<feature type="transmembrane region" description="Helical" evidence="1">
    <location>
        <begin position="383"/>
        <end position="403"/>
    </location>
</feature>
<feature type="transmembrane region" description="Helical" evidence="1">
    <location>
        <begin position="422"/>
        <end position="442"/>
    </location>
</feature>
<gene>
    <name evidence="1" type="primary">mntH</name>
    <name type="ordered locus">SAUSA300_1005</name>
</gene>
<evidence type="ECO:0000255" key="1">
    <source>
        <dbReference type="HAMAP-Rule" id="MF_00221"/>
    </source>
</evidence>
<proteinExistence type="inferred from homology"/>
<comment type="function">
    <text evidence="1">H(+)-stimulated, divalent metal cation uptake system.</text>
</comment>
<comment type="subcellular location">
    <subcellularLocation>
        <location evidence="1">Cell membrane</location>
        <topology evidence="1">Multi-pass membrane protein</topology>
    </subcellularLocation>
</comment>
<comment type="similarity">
    <text evidence="1">Belongs to the NRAMP family.</text>
</comment>
<sequence>MNNKRHSTNEQLSLDEINNTIKFDHRSSNKQKFLSFLGPGLLVAVGYMDPGNWITSMQGGAQYGYTLLFVILISSLSAMLLQSMTVRLGIATGMDLAQMTRHYLSRPIAIIFWIIAELAIIATDIAEVIGSAIALNLLFNIPLIVGALITVLDVFLLLFIMKYGFRKIEAIVGTLIFTVLFIFIFEVYISSPQLNAVLNGFIPHSEIITNNGILYIALGIIGATIMPHNLYLHSSIVQSRTYSRHNNEEKAQAIKFATIDSNIQLSIAFVVNCLLLVLGASLFFNSNADDLGGFYDLYHALKTEPVLGATMGAIMSTLFAVALLASGQNSTITGTLAGQIVMEGFLRLHIPNWLRRLITRSLAVIPVIVCLIIFKGNAAKIEQLLVFSQVFLSIALPFCLIPLQLATSNKDLMGPFYNKTWVNIISWTLIIILSILNVYLIVQTFQELQS</sequence>
<keyword id="KW-1003">Cell membrane</keyword>
<keyword id="KW-0406">Ion transport</keyword>
<keyword id="KW-0472">Membrane</keyword>
<keyword id="KW-0769">Symport</keyword>
<keyword id="KW-0812">Transmembrane</keyword>
<keyword id="KW-1133">Transmembrane helix</keyword>
<keyword id="KW-0813">Transport</keyword>
<dbReference type="EMBL" id="CP000255">
    <property type="protein sequence ID" value="ABD21449.1"/>
    <property type="molecule type" value="Genomic_DNA"/>
</dbReference>
<dbReference type="RefSeq" id="WP_001060842.1">
    <property type="nucleotide sequence ID" value="NZ_CP027476.1"/>
</dbReference>
<dbReference type="SMR" id="Q2FHX5"/>
<dbReference type="KEGG" id="saa:SAUSA300_1005"/>
<dbReference type="HOGENOM" id="CLU_020088_2_0_9"/>
<dbReference type="Proteomes" id="UP000001939">
    <property type="component" value="Chromosome"/>
</dbReference>
<dbReference type="GO" id="GO:0005886">
    <property type="term" value="C:plasma membrane"/>
    <property type="evidence" value="ECO:0007669"/>
    <property type="project" value="UniProtKB-SubCell"/>
</dbReference>
<dbReference type="GO" id="GO:0015086">
    <property type="term" value="F:cadmium ion transmembrane transporter activity"/>
    <property type="evidence" value="ECO:0007669"/>
    <property type="project" value="TreeGrafter"/>
</dbReference>
<dbReference type="GO" id="GO:0005384">
    <property type="term" value="F:manganese ion transmembrane transporter activity"/>
    <property type="evidence" value="ECO:0007669"/>
    <property type="project" value="TreeGrafter"/>
</dbReference>
<dbReference type="GO" id="GO:0046872">
    <property type="term" value="F:metal ion binding"/>
    <property type="evidence" value="ECO:0007669"/>
    <property type="project" value="UniProtKB-UniRule"/>
</dbReference>
<dbReference type="GO" id="GO:0015293">
    <property type="term" value="F:symporter activity"/>
    <property type="evidence" value="ECO:0007669"/>
    <property type="project" value="UniProtKB-UniRule"/>
</dbReference>
<dbReference type="GO" id="GO:0034755">
    <property type="term" value="P:iron ion transmembrane transport"/>
    <property type="evidence" value="ECO:0007669"/>
    <property type="project" value="TreeGrafter"/>
</dbReference>
<dbReference type="HAMAP" id="MF_00221">
    <property type="entry name" value="NRAMP"/>
    <property type="match status" value="1"/>
</dbReference>
<dbReference type="InterPro" id="IPR001046">
    <property type="entry name" value="NRAMP_fam"/>
</dbReference>
<dbReference type="NCBIfam" id="TIGR01197">
    <property type="entry name" value="nramp"/>
    <property type="match status" value="1"/>
</dbReference>
<dbReference type="NCBIfam" id="NF037982">
    <property type="entry name" value="Nramp_1"/>
    <property type="match status" value="1"/>
</dbReference>
<dbReference type="NCBIfam" id="NF001923">
    <property type="entry name" value="PRK00701.1"/>
    <property type="match status" value="1"/>
</dbReference>
<dbReference type="PANTHER" id="PTHR11706:SF33">
    <property type="entry name" value="NATURAL RESISTANCE-ASSOCIATED MACROPHAGE PROTEIN 2"/>
    <property type="match status" value="1"/>
</dbReference>
<dbReference type="PANTHER" id="PTHR11706">
    <property type="entry name" value="SOLUTE CARRIER PROTEIN FAMILY 11 MEMBER"/>
    <property type="match status" value="1"/>
</dbReference>
<dbReference type="Pfam" id="PF01566">
    <property type="entry name" value="Nramp"/>
    <property type="match status" value="1"/>
</dbReference>
<dbReference type="PRINTS" id="PR00447">
    <property type="entry name" value="NATRESASSCMP"/>
</dbReference>
<accession>Q2FHX5</accession>
<organism>
    <name type="scientific">Staphylococcus aureus (strain USA300)</name>
    <dbReference type="NCBI Taxonomy" id="367830"/>
    <lineage>
        <taxon>Bacteria</taxon>
        <taxon>Bacillati</taxon>
        <taxon>Bacillota</taxon>
        <taxon>Bacilli</taxon>
        <taxon>Bacillales</taxon>
        <taxon>Staphylococcaceae</taxon>
        <taxon>Staphylococcus</taxon>
    </lineage>
</organism>